<proteinExistence type="evidence at protein level"/>
<dbReference type="EMBL" id="AF079363">
    <property type="protein sequence ID" value="AAC32590.1"/>
    <property type="molecule type" value="mRNA"/>
</dbReference>
<dbReference type="EMBL" id="AL080136">
    <property type="protein sequence ID" value="CAB45730.1"/>
    <property type="molecule type" value="mRNA"/>
</dbReference>
<dbReference type="EMBL" id="CR533552">
    <property type="protein sequence ID" value="CAG38583.1"/>
    <property type="molecule type" value="mRNA"/>
</dbReference>
<dbReference type="EMBL" id="AK289903">
    <property type="protein sequence ID" value="BAF82592.1"/>
    <property type="molecule type" value="mRNA"/>
</dbReference>
<dbReference type="EMBL" id="AK302194">
    <property type="protein sequence ID" value="BAG63556.1"/>
    <property type="molecule type" value="mRNA"/>
</dbReference>
<dbReference type="EMBL" id="AL158211">
    <property type="status" value="NOT_ANNOTATED_CDS"/>
    <property type="molecule type" value="Genomic_DNA"/>
</dbReference>
<dbReference type="EMBL" id="AL513128">
    <property type="status" value="NOT_ANNOTATED_CDS"/>
    <property type="molecule type" value="Genomic_DNA"/>
</dbReference>
<dbReference type="EMBL" id="CH471072">
    <property type="protein sequence ID" value="EAW86146.1"/>
    <property type="molecule type" value="Genomic_DNA"/>
</dbReference>
<dbReference type="EMBL" id="BC030585">
    <property type="protein sequence ID" value="AAH30585.1"/>
    <property type="molecule type" value="mRNA"/>
</dbReference>
<dbReference type="CCDS" id="CCDS58071.1">
    <molecule id="O75602-5"/>
</dbReference>
<dbReference type="CCDS" id="CCDS7139.1">
    <molecule id="O75602-1"/>
</dbReference>
<dbReference type="CCDS" id="CCDS7140.1">
    <molecule id="O75602-2"/>
</dbReference>
<dbReference type="PIR" id="T12521">
    <property type="entry name" value="T12521"/>
</dbReference>
<dbReference type="RefSeq" id="NP_001240783.1">
    <molecule id="O75602-5"/>
    <property type="nucleotide sequence ID" value="NM_001253854.2"/>
</dbReference>
<dbReference type="RefSeq" id="NP_001240784.1">
    <property type="nucleotide sequence ID" value="NM_001253855.1"/>
</dbReference>
<dbReference type="RefSeq" id="NP_036575.1">
    <molecule id="O75602-1"/>
    <property type="nucleotide sequence ID" value="NM_012443.4"/>
</dbReference>
<dbReference type="RefSeq" id="NP_758442.1">
    <molecule id="O75602-2"/>
    <property type="nucleotide sequence ID" value="NM_172242.3"/>
</dbReference>
<dbReference type="SMR" id="O75602"/>
<dbReference type="BioGRID" id="114945">
    <property type="interactions" value="26"/>
</dbReference>
<dbReference type="FunCoup" id="O75602">
    <property type="interactions" value="41"/>
</dbReference>
<dbReference type="IntAct" id="O75602">
    <property type="interactions" value="19"/>
</dbReference>
<dbReference type="STRING" id="9606.ENSP00000365811"/>
<dbReference type="iPTMnet" id="O75602"/>
<dbReference type="PhosphoSitePlus" id="O75602"/>
<dbReference type="BioMuta" id="SPAG6"/>
<dbReference type="MassIVE" id="O75602"/>
<dbReference type="PaxDb" id="9606-ENSP00000365811"/>
<dbReference type="PeptideAtlas" id="O75602"/>
<dbReference type="ProteomicsDB" id="50107">
    <molecule id="O75602-1"/>
</dbReference>
<dbReference type="ProteomicsDB" id="50108">
    <molecule id="O75602-2"/>
</dbReference>
<dbReference type="ProteomicsDB" id="50109">
    <molecule id="O75602-3"/>
</dbReference>
<dbReference type="ProteomicsDB" id="50110">
    <molecule id="O75602-4"/>
</dbReference>
<dbReference type="ProteomicsDB" id="5482"/>
<dbReference type="Antibodypedia" id="25669">
    <property type="antibodies" value="164 antibodies from 24 providers"/>
</dbReference>
<dbReference type="DNASU" id="9576"/>
<dbReference type="Ensembl" id="ENST00000313311.10">
    <molecule id="O75602-2"/>
    <property type="protein sequence ID" value="ENSP00000323599.6"/>
    <property type="gene ID" value="ENSG00000077327.16"/>
</dbReference>
<dbReference type="Ensembl" id="ENST00000376624.8">
    <molecule id="O75602-1"/>
    <property type="protein sequence ID" value="ENSP00000365811.3"/>
    <property type="gene ID" value="ENSG00000077327.16"/>
</dbReference>
<dbReference type="Ensembl" id="ENST00000538630.2">
    <molecule id="O75602-5"/>
    <property type="protein sequence ID" value="ENSP00000441325.1"/>
    <property type="gene ID" value="ENSG00000077327.16"/>
</dbReference>
<dbReference type="GeneID" id="9576"/>
<dbReference type="KEGG" id="hsa:9576"/>
<dbReference type="MANE-Select" id="ENST00000376624.8">
    <property type="protein sequence ID" value="ENSP00000365811.3"/>
    <property type="RefSeq nucleotide sequence ID" value="NM_012443.4"/>
    <property type="RefSeq protein sequence ID" value="NP_036575.1"/>
</dbReference>
<dbReference type="UCSC" id="uc001iri.4">
    <molecule id="O75602-1"/>
    <property type="organism name" value="human"/>
</dbReference>
<dbReference type="AGR" id="HGNC:11215"/>
<dbReference type="CTD" id="9576"/>
<dbReference type="DisGeNET" id="9576"/>
<dbReference type="GeneCards" id="SPAG6"/>
<dbReference type="HGNC" id="HGNC:11215">
    <property type="gene designation" value="SPAG6"/>
</dbReference>
<dbReference type="HPA" id="ENSG00000077327">
    <property type="expression patterns" value="Group enriched (choroid plexus, fallopian tube, testis)"/>
</dbReference>
<dbReference type="MIM" id="605730">
    <property type="type" value="gene"/>
</dbReference>
<dbReference type="neXtProt" id="NX_O75602"/>
<dbReference type="OpenTargets" id="ENSG00000077327"/>
<dbReference type="PharmGKB" id="PA36051"/>
<dbReference type="VEuPathDB" id="HostDB:ENSG00000077327"/>
<dbReference type="eggNOG" id="KOG0166">
    <property type="taxonomic scope" value="Eukaryota"/>
</dbReference>
<dbReference type="GeneTree" id="ENSGT00900000141099"/>
<dbReference type="HOGENOM" id="CLU_022627_1_0_1"/>
<dbReference type="InParanoid" id="O75602"/>
<dbReference type="OMA" id="CECIEQS"/>
<dbReference type="OrthoDB" id="7537227at2759"/>
<dbReference type="PAN-GO" id="O75602">
    <property type="GO annotations" value="9 GO annotations based on evolutionary models"/>
</dbReference>
<dbReference type="PhylomeDB" id="O75602"/>
<dbReference type="TreeFam" id="TF328894"/>
<dbReference type="PathwayCommons" id="O75602"/>
<dbReference type="SignaLink" id="O75602"/>
<dbReference type="SIGNOR" id="O75602"/>
<dbReference type="BioGRID-ORCS" id="9576">
    <property type="hits" value="12 hits in 1151 CRISPR screens"/>
</dbReference>
<dbReference type="ChiTaRS" id="SPAG6">
    <property type="organism name" value="human"/>
</dbReference>
<dbReference type="GeneWiki" id="SPAG6"/>
<dbReference type="GenomeRNAi" id="9576"/>
<dbReference type="Pharos" id="O75602">
    <property type="development level" value="Tbio"/>
</dbReference>
<dbReference type="PRO" id="PR:O75602"/>
<dbReference type="Proteomes" id="UP000005640">
    <property type="component" value="Chromosome 10"/>
</dbReference>
<dbReference type="RNAct" id="O75602">
    <property type="molecule type" value="protein"/>
</dbReference>
<dbReference type="Bgee" id="ENSG00000077327">
    <property type="expression patterns" value="Expressed in bronchial epithelial cell and 121 other cell types or tissues"/>
</dbReference>
<dbReference type="ExpressionAtlas" id="O75602">
    <property type="expression patterns" value="baseline and differential"/>
</dbReference>
<dbReference type="GO" id="GO:0001669">
    <property type="term" value="C:acrosomal vesicle"/>
    <property type="evidence" value="ECO:0000318"/>
    <property type="project" value="GO_Central"/>
</dbReference>
<dbReference type="GO" id="GO:0005930">
    <property type="term" value="C:axoneme"/>
    <property type="evidence" value="ECO:0000314"/>
    <property type="project" value="GO_Central"/>
</dbReference>
<dbReference type="GO" id="GO:0005576">
    <property type="term" value="C:extracellular region"/>
    <property type="evidence" value="ECO:0007669"/>
    <property type="project" value="GOC"/>
</dbReference>
<dbReference type="GO" id="GO:0005874">
    <property type="term" value="C:microtubule"/>
    <property type="evidence" value="ECO:0007669"/>
    <property type="project" value="UniProtKB-KW"/>
</dbReference>
<dbReference type="GO" id="GO:0015630">
    <property type="term" value="C:microtubule cytoskeleton"/>
    <property type="evidence" value="ECO:0000314"/>
    <property type="project" value="LIFEdb"/>
</dbReference>
<dbReference type="GO" id="GO:0005634">
    <property type="term" value="C:nucleus"/>
    <property type="evidence" value="ECO:0007005"/>
    <property type="project" value="UniProtKB"/>
</dbReference>
<dbReference type="GO" id="GO:0097228">
    <property type="term" value="C:sperm principal piece"/>
    <property type="evidence" value="ECO:0000314"/>
    <property type="project" value="UniProtKB"/>
</dbReference>
<dbReference type="GO" id="GO:0008017">
    <property type="term" value="F:microtubule binding"/>
    <property type="evidence" value="ECO:0000318"/>
    <property type="project" value="GO_Central"/>
</dbReference>
<dbReference type="GO" id="GO:0003351">
    <property type="term" value="P:epithelial cilium movement involved in extracellular fluid movement"/>
    <property type="evidence" value="ECO:0000318"/>
    <property type="project" value="GO_Central"/>
</dbReference>
<dbReference type="GO" id="GO:0046847">
    <property type="term" value="P:filopodium assembly"/>
    <property type="evidence" value="ECO:0000318"/>
    <property type="project" value="GO_Central"/>
</dbReference>
<dbReference type="GO" id="GO:1990138">
    <property type="term" value="P:neuron projection extension"/>
    <property type="evidence" value="ECO:0000318"/>
    <property type="project" value="GO_Central"/>
</dbReference>
<dbReference type="GO" id="GO:0007288">
    <property type="term" value="P:sperm axoneme assembly"/>
    <property type="evidence" value="ECO:0000318"/>
    <property type="project" value="GO_Central"/>
</dbReference>
<dbReference type="FunFam" id="1.25.10.10:FF:000196">
    <property type="entry name" value="Sperm associated antigen 6"/>
    <property type="match status" value="1"/>
</dbReference>
<dbReference type="FunFam" id="1.25.10.10:FF:000129">
    <property type="entry name" value="sperm-associated antigen 6 isoform X1"/>
    <property type="match status" value="1"/>
</dbReference>
<dbReference type="Gene3D" id="1.25.10.10">
    <property type="entry name" value="Leucine-rich Repeat Variant"/>
    <property type="match status" value="2"/>
</dbReference>
<dbReference type="InterPro" id="IPR011989">
    <property type="entry name" value="ARM-like"/>
</dbReference>
<dbReference type="InterPro" id="IPR016024">
    <property type="entry name" value="ARM-type_fold"/>
</dbReference>
<dbReference type="InterPro" id="IPR000225">
    <property type="entry name" value="Armadillo"/>
</dbReference>
<dbReference type="PANTHER" id="PTHR23314:SF0">
    <property type="entry name" value="SPERM-ASSOCIATED ANTIGEN 6"/>
    <property type="match status" value="1"/>
</dbReference>
<dbReference type="PANTHER" id="PTHR23314">
    <property type="entry name" value="SPERM-ASSOCIATED ANTIGEN 6 ARMADILLO REPEAT-CONTAINING"/>
    <property type="match status" value="1"/>
</dbReference>
<dbReference type="Pfam" id="PF00514">
    <property type="entry name" value="Arm"/>
    <property type="match status" value="4"/>
</dbReference>
<dbReference type="SMART" id="SM00185">
    <property type="entry name" value="ARM"/>
    <property type="match status" value="7"/>
</dbReference>
<dbReference type="SUPFAM" id="SSF48371">
    <property type="entry name" value="ARM repeat"/>
    <property type="match status" value="1"/>
</dbReference>
<name>SPAG6_HUMAN</name>
<protein>
    <recommendedName>
        <fullName>Sperm-associated antigen 6</fullName>
    </recommendedName>
    <alternativeName>
        <fullName>Protein PF16 homolog</fullName>
    </alternativeName>
    <alternativeName>
        <fullName>Repro-SA-1</fullName>
    </alternativeName>
    <alternativeName>
        <fullName>Sperm flagellar protein</fullName>
    </alternativeName>
</protein>
<evidence type="ECO:0000250" key="1"/>
<evidence type="ECO:0000250" key="2">
    <source>
        <dbReference type="UniProtKB" id="Q9JLI7"/>
    </source>
</evidence>
<evidence type="ECO:0000269" key="3">
    <source>
    </source>
</evidence>
<evidence type="ECO:0000269" key="4">
    <source>
    </source>
</evidence>
<evidence type="ECO:0000303" key="5">
    <source>
    </source>
</evidence>
<evidence type="ECO:0000303" key="6">
    <source>
    </source>
</evidence>
<evidence type="ECO:0000305" key="7"/>
<reference key="1">
    <citation type="journal article" date="1999" name="Genomics">
        <title>cDNA cloning and characterization of a human sperm antigen (SPAG6) with homology to the product of the Chlamydomonas PF16 locus.</title>
        <authorList>
            <person name="Neilson L.I."/>
            <person name="Schneider P.A."/>
            <person name="Van Deerlin P.G."/>
            <person name="Kiriakidou M."/>
            <person name="Driscoll D.A."/>
            <person name="Pellegrini M.C."/>
            <person name="Millinder S."/>
            <person name="Yamamoto K.K."/>
            <person name="French C.K."/>
            <person name="Strauss J.F. III"/>
        </authorList>
    </citation>
    <scope>NUCLEOTIDE SEQUENCE [MRNA] (ISOFORM 1)</scope>
    <scope>FUNCTION</scope>
    <scope>TISSUE SPECIFICITY</scope>
    <scope>SUBCELLULAR LOCATION</scope>
    <source>
        <tissue>Testis</tissue>
    </source>
</reference>
<reference key="2">
    <citation type="journal article" date="2001" name="Genome Res.">
        <title>Towards a catalog of human genes and proteins: sequencing and analysis of 500 novel complete protein coding human cDNAs.</title>
        <authorList>
            <person name="Wiemann S."/>
            <person name="Weil B."/>
            <person name="Wellenreuther R."/>
            <person name="Gassenhuber J."/>
            <person name="Glassl S."/>
            <person name="Ansorge W."/>
            <person name="Boecher M."/>
            <person name="Bloecker H."/>
            <person name="Bauersachs S."/>
            <person name="Blum H."/>
            <person name="Lauber J."/>
            <person name="Duesterhoeft A."/>
            <person name="Beyer A."/>
            <person name="Koehrer K."/>
            <person name="Strack N."/>
            <person name="Mewes H.-W."/>
            <person name="Ottenwaelder B."/>
            <person name="Obermaier B."/>
            <person name="Tampe J."/>
            <person name="Heubner D."/>
            <person name="Wambutt R."/>
            <person name="Korn B."/>
            <person name="Klein M."/>
            <person name="Poustka A."/>
        </authorList>
    </citation>
    <scope>NUCLEOTIDE SEQUENCE [LARGE SCALE MRNA] (ISOFORM 1)</scope>
    <source>
        <tissue>Testis</tissue>
    </source>
</reference>
<reference key="3">
    <citation type="submission" date="2004-06" db="EMBL/GenBank/DDBJ databases">
        <title>Cloning of human full open reading frames in Gateway(TM) system entry vector (pDONR201).</title>
        <authorList>
            <person name="Ebert L."/>
            <person name="Schick M."/>
            <person name="Neubert P."/>
            <person name="Schatten R."/>
            <person name="Henze S."/>
            <person name="Korn B."/>
        </authorList>
    </citation>
    <scope>NUCLEOTIDE SEQUENCE [LARGE SCALE MRNA] (ISOFORM 1)</scope>
</reference>
<reference key="4">
    <citation type="journal article" date="2004" name="Nat. Genet.">
        <title>Complete sequencing and characterization of 21,243 full-length human cDNAs.</title>
        <authorList>
            <person name="Ota T."/>
            <person name="Suzuki Y."/>
            <person name="Nishikawa T."/>
            <person name="Otsuki T."/>
            <person name="Sugiyama T."/>
            <person name="Irie R."/>
            <person name="Wakamatsu A."/>
            <person name="Hayashi K."/>
            <person name="Sato H."/>
            <person name="Nagai K."/>
            <person name="Kimura K."/>
            <person name="Makita H."/>
            <person name="Sekine M."/>
            <person name="Obayashi M."/>
            <person name="Nishi T."/>
            <person name="Shibahara T."/>
            <person name="Tanaka T."/>
            <person name="Ishii S."/>
            <person name="Yamamoto J."/>
            <person name="Saito K."/>
            <person name="Kawai Y."/>
            <person name="Isono Y."/>
            <person name="Nakamura Y."/>
            <person name="Nagahari K."/>
            <person name="Murakami K."/>
            <person name="Yasuda T."/>
            <person name="Iwayanagi T."/>
            <person name="Wagatsuma M."/>
            <person name="Shiratori A."/>
            <person name="Sudo H."/>
            <person name="Hosoiri T."/>
            <person name="Kaku Y."/>
            <person name="Kodaira H."/>
            <person name="Kondo H."/>
            <person name="Sugawara M."/>
            <person name="Takahashi M."/>
            <person name="Kanda K."/>
            <person name="Yokoi T."/>
            <person name="Furuya T."/>
            <person name="Kikkawa E."/>
            <person name="Omura Y."/>
            <person name="Abe K."/>
            <person name="Kamihara K."/>
            <person name="Katsuta N."/>
            <person name="Sato K."/>
            <person name="Tanikawa M."/>
            <person name="Yamazaki M."/>
            <person name="Ninomiya K."/>
            <person name="Ishibashi T."/>
            <person name="Yamashita H."/>
            <person name="Murakawa K."/>
            <person name="Fujimori K."/>
            <person name="Tanai H."/>
            <person name="Kimata M."/>
            <person name="Watanabe M."/>
            <person name="Hiraoka S."/>
            <person name="Chiba Y."/>
            <person name="Ishida S."/>
            <person name="Ono Y."/>
            <person name="Takiguchi S."/>
            <person name="Watanabe S."/>
            <person name="Yosida M."/>
            <person name="Hotuta T."/>
            <person name="Kusano J."/>
            <person name="Kanehori K."/>
            <person name="Takahashi-Fujii A."/>
            <person name="Hara H."/>
            <person name="Tanase T.-O."/>
            <person name="Nomura Y."/>
            <person name="Togiya S."/>
            <person name="Komai F."/>
            <person name="Hara R."/>
            <person name="Takeuchi K."/>
            <person name="Arita M."/>
            <person name="Imose N."/>
            <person name="Musashino K."/>
            <person name="Yuuki H."/>
            <person name="Oshima A."/>
            <person name="Sasaki N."/>
            <person name="Aotsuka S."/>
            <person name="Yoshikawa Y."/>
            <person name="Matsunawa H."/>
            <person name="Ichihara T."/>
            <person name="Shiohata N."/>
            <person name="Sano S."/>
            <person name="Moriya S."/>
            <person name="Momiyama H."/>
            <person name="Satoh N."/>
            <person name="Takami S."/>
            <person name="Terashima Y."/>
            <person name="Suzuki O."/>
            <person name="Nakagawa S."/>
            <person name="Senoh A."/>
            <person name="Mizoguchi H."/>
            <person name="Goto Y."/>
            <person name="Shimizu F."/>
            <person name="Wakebe H."/>
            <person name="Hishigaki H."/>
            <person name="Watanabe T."/>
            <person name="Sugiyama A."/>
            <person name="Takemoto M."/>
            <person name="Kawakami B."/>
            <person name="Yamazaki M."/>
            <person name="Watanabe K."/>
            <person name="Kumagai A."/>
            <person name="Itakura S."/>
            <person name="Fukuzumi Y."/>
            <person name="Fujimori Y."/>
            <person name="Komiyama M."/>
            <person name="Tashiro H."/>
            <person name="Tanigami A."/>
            <person name="Fujiwara T."/>
            <person name="Ono T."/>
            <person name="Yamada K."/>
            <person name="Fujii Y."/>
            <person name="Ozaki K."/>
            <person name="Hirao M."/>
            <person name="Ohmori Y."/>
            <person name="Kawabata A."/>
            <person name="Hikiji T."/>
            <person name="Kobatake N."/>
            <person name="Inagaki H."/>
            <person name="Ikema Y."/>
            <person name="Okamoto S."/>
            <person name="Okitani R."/>
            <person name="Kawakami T."/>
            <person name="Noguchi S."/>
            <person name="Itoh T."/>
            <person name="Shigeta K."/>
            <person name="Senba T."/>
            <person name="Matsumura K."/>
            <person name="Nakajima Y."/>
            <person name="Mizuno T."/>
            <person name="Morinaga M."/>
            <person name="Sasaki M."/>
            <person name="Togashi T."/>
            <person name="Oyama M."/>
            <person name="Hata H."/>
            <person name="Watanabe M."/>
            <person name="Komatsu T."/>
            <person name="Mizushima-Sugano J."/>
            <person name="Satoh T."/>
            <person name="Shirai Y."/>
            <person name="Takahashi Y."/>
            <person name="Nakagawa K."/>
            <person name="Okumura K."/>
            <person name="Nagase T."/>
            <person name="Nomura N."/>
            <person name="Kikuchi H."/>
            <person name="Masuho Y."/>
            <person name="Yamashita R."/>
            <person name="Nakai K."/>
            <person name="Yada T."/>
            <person name="Nakamura Y."/>
            <person name="Ohara O."/>
            <person name="Isogai T."/>
            <person name="Sugano S."/>
        </authorList>
    </citation>
    <scope>NUCLEOTIDE SEQUENCE [LARGE SCALE MRNA] (ISOFORMS 1 AND 5)</scope>
    <source>
        <tissue>Corpus callosum</tissue>
        <tissue>Testis</tissue>
    </source>
</reference>
<reference key="5">
    <citation type="journal article" date="2004" name="Nature">
        <title>The DNA sequence and comparative analysis of human chromosome 10.</title>
        <authorList>
            <person name="Deloukas P."/>
            <person name="Earthrowl M.E."/>
            <person name="Grafham D.V."/>
            <person name="Rubenfield M."/>
            <person name="French L."/>
            <person name="Steward C.A."/>
            <person name="Sims S.K."/>
            <person name="Jones M.C."/>
            <person name="Searle S."/>
            <person name="Scott C."/>
            <person name="Howe K."/>
            <person name="Hunt S.E."/>
            <person name="Andrews T.D."/>
            <person name="Gilbert J.G.R."/>
            <person name="Swarbreck D."/>
            <person name="Ashurst J.L."/>
            <person name="Taylor A."/>
            <person name="Battles J."/>
            <person name="Bird C.P."/>
            <person name="Ainscough R."/>
            <person name="Almeida J.P."/>
            <person name="Ashwell R.I.S."/>
            <person name="Ambrose K.D."/>
            <person name="Babbage A.K."/>
            <person name="Bagguley C.L."/>
            <person name="Bailey J."/>
            <person name="Banerjee R."/>
            <person name="Bates K."/>
            <person name="Beasley H."/>
            <person name="Bray-Allen S."/>
            <person name="Brown A.J."/>
            <person name="Brown J.Y."/>
            <person name="Burford D.C."/>
            <person name="Burrill W."/>
            <person name="Burton J."/>
            <person name="Cahill P."/>
            <person name="Camire D."/>
            <person name="Carter N.P."/>
            <person name="Chapman J.C."/>
            <person name="Clark S.Y."/>
            <person name="Clarke G."/>
            <person name="Clee C.M."/>
            <person name="Clegg S."/>
            <person name="Corby N."/>
            <person name="Coulson A."/>
            <person name="Dhami P."/>
            <person name="Dutta I."/>
            <person name="Dunn M."/>
            <person name="Faulkner L."/>
            <person name="Frankish A."/>
            <person name="Frankland J.A."/>
            <person name="Garner P."/>
            <person name="Garnett J."/>
            <person name="Gribble S."/>
            <person name="Griffiths C."/>
            <person name="Grocock R."/>
            <person name="Gustafson E."/>
            <person name="Hammond S."/>
            <person name="Harley J.L."/>
            <person name="Hart E."/>
            <person name="Heath P.D."/>
            <person name="Ho T.P."/>
            <person name="Hopkins B."/>
            <person name="Horne J."/>
            <person name="Howden P.J."/>
            <person name="Huckle E."/>
            <person name="Hynds C."/>
            <person name="Johnson C."/>
            <person name="Johnson D."/>
            <person name="Kana A."/>
            <person name="Kay M."/>
            <person name="Kimberley A.M."/>
            <person name="Kershaw J.K."/>
            <person name="Kokkinaki M."/>
            <person name="Laird G.K."/>
            <person name="Lawlor S."/>
            <person name="Lee H.M."/>
            <person name="Leongamornlert D.A."/>
            <person name="Laird G."/>
            <person name="Lloyd C."/>
            <person name="Lloyd D.M."/>
            <person name="Loveland J."/>
            <person name="Lovell J."/>
            <person name="McLaren S."/>
            <person name="McLay K.E."/>
            <person name="McMurray A."/>
            <person name="Mashreghi-Mohammadi M."/>
            <person name="Matthews L."/>
            <person name="Milne S."/>
            <person name="Nickerson T."/>
            <person name="Nguyen M."/>
            <person name="Overton-Larty E."/>
            <person name="Palmer S.A."/>
            <person name="Pearce A.V."/>
            <person name="Peck A.I."/>
            <person name="Pelan S."/>
            <person name="Phillimore B."/>
            <person name="Porter K."/>
            <person name="Rice C.M."/>
            <person name="Rogosin A."/>
            <person name="Ross M.T."/>
            <person name="Sarafidou T."/>
            <person name="Sehra H.K."/>
            <person name="Shownkeen R."/>
            <person name="Skuce C.D."/>
            <person name="Smith M."/>
            <person name="Standring L."/>
            <person name="Sycamore N."/>
            <person name="Tester J."/>
            <person name="Thorpe A."/>
            <person name="Torcasso W."/>
            <person name="Tracey A."/>
            <person name="Tromans A."/>
            <person name="Tsolas J."/>
            <person name="Wall M."/>
            <person name="Walsh J."/>
            <person name="Wang H."/>
            <person name="Weinstock K."/>
            <person name="West A.P."/>
            <person name="Willey D.L."/>
            <person name="Whitehead S.L."/>
            <person name="Wilming L."/>
            <person name="Wray P.W."/>
            <person name="Young L."/>
            <person name="Chen Y."/>
            <person name="Lovering R.C."/>
            <person name="Moschonas N.K."/>
            <person name="Siebert R."/>
            <person name="Fechtel K."/>
            <person name="Bentley D."/>
            <person name="Durbin R.M."/>
            <person name="Hubbard T."/>
            <person name="Doucette-Stamm L."/>
            <person name="Beck S."/>
            <person name="Smith D.R."/>
            <person name="Rogers J."/>
        </authorList>
    </citation>
    <scope>NUCLEOTIDE SEQUENCE [LARGE SCALE GENOMIC DNA] (ISOFORMS 1; 2; 3 AND 4)</scope>
</reference>
<reference key="6">
    <citation type="submission" date="2005-09" db="EMBL/GenBank/DDBJ databases">
        <authorList>
            <person name="Mural R.J."/>
            <person name="Istrail S."/>
            <person name="Sutton G.G."/>
            <person name="Florea L."/>
            <person name="Halpern A.L."/>
            <person name="Mobarry C.M."/>
            <person name="Lippert R."/>
            <person name="Walenz B."/>
            <person name="Shatkay H."/>
            <person name="Dew I."/>
            <person name="Miller J.R."/>
            <person name="Flanigan M.J."/>
            <person name="Edwards N.J."/>
            <person name="Bolanos R."/>
            <person name="Fasulo D."/>
            <person name="Halldorsson B.V."/>
            <person name="Hannenhalli S."/>
            <person name="Turner R."/>
            <person name="Yooseph S."/>
            <person name="Lu F."/>
            <person name="Nusskern D.R."/>
            <person name="Shue B.C."/>
            <person name="Zheng X.H."/>
            <person name="Zhong F."/>
            <person name="Delcher A.L."/>
            <person name="Huson D.H."/>
            <person name="Kravitz S.A."/>
            <person name="Mouchard L."/>
            <person name="Reinert K."/>
            <person name="Remington K.A."/>
            <person name="Clark A.G."/>
            <person name="Waterman M.S."/>
            <person name="Eichler E.E."/>
            <person name="Adams M.D."/>
            <person name="Hunkapiller M.W."/>
            <person name="Myers E.W."/>
            <person name="Venter J.C."/>
        </authorList>
    </citation>
    <scope>NUCLEOTIDE SEQUENCE [LARGE SCALE GENOMIC DNA]</scope>
</reference>
<reference key="7">
    <citation type="journal article" date="2004" name="Genome Res.">
        <title>The status, quality, and expansion of the NIH full-length cDNA project: the Mammalian Gene Collection (MGC).</title>
        <authorList>
            <consortium name="The MGC Project Team"/>
        </authorList>
    </citation>
    <scope>NUCLEOTIDE SEQUENCE [LARGE SCALE MRNA] (ISOFORM 2)</scope>
    <source>
        <tissue>Testis</tissue>
    </source>
</reference>
<reference key="8">
    <citation type="journal article" date="2006" name="Science">
        <title>The consensus coding sequences of human breast and colorectal cancers.</title>
        <authorList>
            <person name="Sjoeblom T."/>
            <person name="Jones S."/>
            <person name="Wood L.D."/>
            <person name="Parsons D.W."/>
            <person name="Lin J."/>
            <person name="Barber T.D."/>
            <person name="Mandelker D."/>
            <person name="Leary R.J."/>
            <person name="Ptak J."/>
            <person name="Silliman N."/>
            <person name="Szabo S."/>
            <person name="Buckhaults P."/>
            <person name="Farrell C."/>
            <person name="Meeh P."/>
            <person name="Markowitz S.D."/>
            <person name="Willis J."/>
            <person name="Dawson D."/>
            <person name="Willson J.K.V."/>
            <person name="Gazdar A.F."/>
            <person name="Hartigan J."/>
            <person name="Wu L."/>
            <person name="Liu C."/>
            <person name="Parmigiani G."/>
            <person name="Park B.H."/>
            <person name="Bachman K.E."/>
            <person name="Papadopoulos N."/>
            <person name="Vogelstein B."/>
            <person name="Kinzler K.W."/>
            <person name="Velculescu V.E."/>
        </authorList>
    </citation>
    <scope>VARIANT [LARGE SCALE ANALYSIS] LEU-106</scope>
</reference>
<gene>
    <name type="primary">SPAG6</name>
    <name type="synonym">PF16</name>
</gene>
<feature type="chain" id="PRO_0000072095" description="Sperm-associated antigen 6">
    <location>
        <begin position="1"/>
        <end position="509"/>
    </location>
</feature>
<feature type="repeat" description="ARM 1">
    <location>
        <begin position="31"/>
        <end position="70"/>
    </location>
</feature>
<feature type="repeat" description="ARM 2">
    <location>
        <begin position="73"/>
        <end position="112"/>
    </location>
</feature>
<feature type="repeat" description="ARM 3">
    <location>
        <begin position="115"/>
        <end position="154"/>
    </location>
</feature>
<feature type="repeat" description="ARM 4">
    <location>
        <begin position="157"/>
        <end position="196"/>
    </location>
</feature>
<feature type="repeat" description="ARM 5">
    <location>
        <begin position="199"/>
        <end position="238"/>
    </location>
</feature>
<feature type="repeat" description="ARM 6">
    <location>
        <begin position="241"/>
        <end position="280"/>
    </location>
</feature>
<feature type="repeat" description="ARM 7">
    <location>
        <begin position="325"/>
        <end position="365"/>
    </location>
</feature>
<feature type="repeat" description="ARM 8">
    <location>
        <begin position="368"/>
        <end position="409"/>
    </location>
</feature>
<feature type="splice variant" id="VSP_045337" description="In isoform 5." evidence="5">
    <original>MSQRQVLQVFEQYQKARTQFVQMVAELATRPQNIETLQN</original>
    <variation>MHSLTMDLWIPNGQ</variation>
    <location>
        <begin position="1"/>
        <end position="39"/>
    </location>
</feature>
<feature type="splice variant" id="VSP_013442" description="In isoform 3." evidence="7">
    <original>G</original>
    <variation>GEPGARTPVAPRALSPRRLRPAALPVELLGSRSVGTGVRKSIHSFQRVFGGQAERVKLPDGCGRCALSLFPSSLHTG</variation>
    <location>
        <position position="41"/>
    </location>
</feature>
<feature type="splice variant" id="VSP_013443" description="In isoform 4." evidence="7">
    <location>
        <begin position="97"/>
        <end position="335"/>
    </location>
</feature>
<feature type="splice variant" id="VSP_013444" description="In isoform 2." evidence="6">
    <original>PHDSKARRLFVTSGGLKK</original>
    <variation>FPWIFRYTSAEGGQLSTT</variation>
    <location>
        <begin position="441"/>
        <end position="458"/>
    </location>
</feature>
<feature type="splice variant" id="VSP_013445" description="In isoform 2." evidence="6">
    <location>
        <begin position="459"/>
        <end position="509"/>
    </location>
</feature>
<feature type="sequence variant" id="VAR_035659" description="In a breast cancer sample; somatic mutation." evidence="4">
    <original>V</original>
    <variation>L</variation>
    <location>
        <position position="106"/>
    </location>
</feature>
<feature type="sequence variant" id="VAR_024282" description="In dbSNP:rs7074847.">
    <original>Q</original>
    <variation>R</variation>
    <location>
        <position position="216"/>
    </location>
</feature>
<feature type="sequence conflict" description="In Ref. 7; AAH30585." evidence="7" ref="7">
    <original>T</original>
    <variation>I</variation>
    <location>
        <position position="60"/>
    </location>
</feature>
<feature type="sequence conflict" description="In Ref. 3; CAG38583." evidence="7" ref="3">
    <original>Q</original>
    <variation>R</variation>
    <location>
        <position position="161"/>
    </location>
</feature>
<feature type="sequence conflict" description="In Ref. 7; AAH30585." evidence="7" ref="7">
    <original>R</original>
    <variation>G</variation>
    <location>
        <position position="185"/>
    </location>
</feature>
<feature type="sequence conflict" description="In Ref. 7; AAH30585." evidence="7" ref="7">
    <original>A</original>
    <variation>V</variation>
    <location>
        <position position="195"/>
    </location>
</feature>
<keyword id="KW-0025">Alternative splicing</keyword>
<keyword id="KW-0966">Cell projection</keyword>
<keyword id="KW-0969">Cilium</keyword>
<keyword id="KW-0970">Cilium biogenesis/degradation</keyword>
<keyword id="KW-0963">Cytoplasm</keyword>
<keyword id="KW-0206">Cytoskeleton</keyword>
<keyword id="KW-0282">Flagellum</keyword>
<keyword id="KW-0493">Microtubule</keyword>
<keyword id="KW-1267">Proteomics identification</keyword>
<keyword id="KW-1185">Reference proteome</keyword>
<keyword id="KW-0677">Repeat</keyword>
<accession>O75602</accession>
<accession>A8K1I8</accession>
<accession>B4DXZ4</accession>
<accession>Q5VUX5</accession>
<accession>Q5VUX6</accession>
<accession>Q5VUX7</accession>
<accession>Q6FI74</accession>
<accession>Q8NHQ6</accession>
<organism>
    <name type="scientific">Homo sapiens</name>
    <name type="common">Human</name>
    <dbReference type="NCBI Taxonomy" id="9606"/>
    <lineage>
        <taxon>Eukaryota</taxon>
        <taxon>Metazoa</taxon>
        <taxon>Chordata</taxon>
        <taxon>Craniata</taxon>
        <taxon>Vertebrata</taxon>
        <taxon>Euteleostomi</taxon>
        <taxon>Mammalia</taxon>
        <taxon>Eutheria</taxon>
        <taxon>Euarchontoglires</taxon>
        <taxon>Primates</taxon>
        <taxon>Haplorrhini</taxon>
        <taxon>Catarrhini</taxon>
        <taxon>Hominidae</taxon>
        <taxon>Homo</taxon>
    </lineage>
</organism>
<comment type="function">
    <text evidence="1 3">Important for structural integrity of the central apparatus in the sperm tail and for flagellar motility.</text>
</comment>
<comment type="subunit">
    <text evidence="1">Interacts with SPAG16 and SPAG17.</text>
</comment>
<comment type="subcellular location">
    <subcellularLocation>
        <location evidence="3">Cytoplasm</location>
        <location evidence="3">Cytoskeleton</location>
    </subcellularLocation>
    <subcellularLocation>
        <location evidence="3">Cell projection</location>
        <location evidence="3">Cilium</location>
        <location evidence="3">Flagellum</location>
    </subcellularLocation>
    <subcellularLocation>
        <location evidence="2">Cytoplasm</location>
        <location evidence="2">Cytoskeleton</location>
        <location evidence="2">Cilium axoneme</location>
    </subcellularLocation>
    <text evidence="2 3">Associated with microtubules. Detected on the sperm flagellum (PubMed:10493827). Localizes in the cilium axoneme in a SPEF1-dependent manner (By similarity).</text>
</comment>
<comment type="alternative products">
    <event type="alternative splicing"/>
    <isoform>
        <id>O75602-1</id>
        <name>1</name>
        <sequence type="displayed"/>
    </isoform>
    <isoform>
        <id>O75602-2</id>
        <name>2</name>
        <sequence type="described" ref="VSP_013444 VSP_013445"/>
    </isoform>
    <isoform>
        <id>O75602-3</id>
        <name>3</name>
        <sequence type="described" ref="VSP_013442"/>
    </isoform>
    <isoform>
        <id>O75602-4</id>
        <name>4</name>
        <sequence type="described" ref="VSP_013443"/>
    </isoform>
    <isoform>
        <id>O75602-5</id>
        <name>5</name>
        <sequence type="described" ref="VSP_045337"/>
    </isoform>
</comment>
<comment type="tissue specificity">
    <text evidence="3">Highly expressed in testis.</text>
</comment>
<sequence>MSQRQVLQVFEQYQKARTQFVQMVAELATRPQNIETLQNAGVMSLLRTLLLDVVPTIQQTAALALGRLANYNDDLAEAVVKCDILPQLVYSLAEQNRFYKKAAAFVLRAVGKHSPQLAQAIVDCGALDTLVICLEDFDPGVKEAAAWALRYIARHNAELSQAVVDAGAVPLLVLCIQEPEIALKRIAASALSDIAKHSPELAQTVVDAGAVAHLAQMILNPDAKLKHQILSALSQVSKHSVDLAEMVVEAEIFPVVLTCLKDKDEYVKKNASTLIREIAKHTPELSQLVVNAGGVAAVIDCIGSCKGNTRLPGIMMLGYVAAHSENLAMAVIISKGVPQLSVCLSEEPEDHIKAAAAWALGQIGRHTPEHARAVAVTNTLPVLLSLYMSTESSEDLQVKSKKAIKNILQKCTYLPALEPFLYDAPPNILKHVVGQFSKVLPHDSKARRLFVTSGGLKKVQEIKAEPGSLLQEYINSINSCYPEEIVRYYSPGYSDTLLQRVDSYQPLNN</sequence>